<proteinExistence type="inferred from homology"/>
<comment type="function">
    <text evidence="5">Deubiquitinating enzyme that removes conjugated ubiquitin from specific proteins to regulate different cellular processes that may include cell proliferation, progression through the cell cycle, apoptosis, cell migration, and the cellular response to viral infection.</text>
</comment>
<comment type="catalytic activity">
    <reaction>
        <text>Thiol-dependent hydrolysis of ester, thioester, amide, peptide and isopeptide bonds formed by the C-terminal Gly of ubiquitin (a 76-residue protein attached to proteins as an intracellular targeting signal).</text>
        <dbReference type="EC" id="3.4.19.12"/>
    </reaction>
</comment>
<comment type="subunit">
    <text evidence="1">Interacts with SUDS3; the interaction is direct.</text>
</comment>
<comment type="subcellular location">
    <subcellularLocation>
        <location evidence="1">Nucleus</location>
    </subcellularLocation>
    <subcellularLocation>
        <location evidence="1">Endoplasmic reticulum</location>
    </subcellularLocation>
</comment>
<comment type="similarity">
    <text evidence="6">Belongs to the peptidase C19 family. USP17 subfamily.</text>
</comment>
<comment type="sequence caution" evidence="6">
    <conflict type="erroneous gene model prediction">
        <sequence resource="EMBL-CDS" id="CAD66057"/>
    </conflict>
</comment>
<keyword id="KW-0053">Apoptosis</keyword>
<keyword id="KW-0131">Cell cycle</keyword>
<keyword id="KW-0256">Endoplasmic reticulum</keyword>
<keyword id="KW-0378">Hydrolase</keyword>
<keyword id="KW-0539">Nucleus</keyword>
<keyword id="KW-0645">Protease</keyword>
<keyword id="KW-1185">Reference proteome</keyword>
<keyword id="KW-0788">Thiol protease</keyword>
<keyword id="KW-0833">Ubl conjugation pathway</keyword>
<feature type="chain" id="PRO_5000095963" description="Ubiquitin carboxyl-terminal hydrolase 17-like protein E">
    <location>
        <begin position="1"/>
        <end position="540"/>
    </location>
</feature>
<feature type="domain" description="USP">
    <location>
        <begin position="85"/>
        <end position="382"/>
    </location>
</feature>
<feature type="region of interest" description="Disordered" evidence="4">
    <location>
        <begin position="1"/>
        <end position="22"/>
    </location>
</feature>
<feature type="region of interest" description="Disordered" evidence="4">
    <location>
        <begin position="431"/>
        <end position="461"/>
    </location>
</feature>
<feature type="region of interest" description="Disordered" evidence="4">
    <location>
        <begin position="499"/>
        <end position="540"/>
    </location>
</feature>
<feature type="compositionally biased region" description="Basic and acidic residues" evidence="4">
    <location>
        <begin position="431"/>
        <end position="441"/>
    </location>
</feature>
<feature type="compositionally biased region" description="Basic and acidic residues" evidence="4">
    <location>
        <begin position="508"/>
        <end position="520"/>
    </location>
</feature>
<feature type="compositionally biased region" description="Polar residues" evidence="4">
    <location>
        <begin position="523"/>
        <end position="540"/>
    </location>
</feature>
<feature type="active site" description="Nucleophile" evidence="2 3">
    <location>
        <position position="94"/>
    </location>
</feature>
<feature type="active site" description="Proton acceptor" evidence="2 3">
    <location>
        <position position="341"/>
    </location>
</feature>
<gene>
    <name type="primary">Usp17le</name>
    <name type="synonym">Dub3</name>
    <name type="synonym">Dub6</name>
    <name type="synonym">Usp17</name>
    <name type="synonym">Usp17l2</name>
</gene>
<organism>
    <name type="scientific">Mus musculus</name>
    <name type="common">Mouse</name>
    <dbReference type="NCBI Taxonomy" id="10090"/>
    <lineage>
        <taxon>Eukaryota</taxon>
        <taxon>Metazoa</taxon>
        <taxon>Chordata</taxon>
        <taxon>Craniata</taxon>
        <taxon>Vertebrata</taxon>
        <taxon>Euteleostomi</taxon>
        <taxon>Mammalia</taxon>
        <taxon>Eutheria</taxon>
        <taxon>Euarchontoglires</taxon>
        <taxon>Glires</taxon>
        <taxon>Rodentia</taxon>
        <taxon>Myomorpha</taxon>
        <taxon>Muroidea</taxon>
        <taxon>Muridae</taxon>
        <taxon>Murinae</taxon>
        <taxon>Mus</taxon>
        <taxon>Mus</taxon>
    </lineage>
</organism>
<sequence>MVVSLSFPEETGGENLPSAPLEDSSKFFEEVFGDMVFARSFPEADPALSSPDAPELHQDEAQVVEELTTNGKHSLSWESPQGPGCGLQNTGNSCYLNAALQCLTHTPPLADYMLSQEHSQTCCSPEGCKMCAMEAHVTQSLLHSHSGDVMKPSQILTSAFHKHQQEDAHEFLMFTLETMHESCLQVHRQSDPTPQDTSPIHDIFGGWWRSQIKCLHCQGTSHTFDPFLDVPLDISSAQSVNQALWDTGKSEELLGENAYYCGRCRQKMPASKTLHVHIAPKVLLLVLKRFSAFTGNKLDRKVSYPEFLDLKPYLSEPTGGPLPYALYAVLVHDGATSNSGHYFCCVKAGHGKWYKMDDTKVTRCDVTSVLNENAYVLFYVQQTDLKQVSIDMPEGRVHEVLDPKYQLKKSRRKKRKKQCHCTDDAGEACENREKRAKKETSLGEGKVPQEVNHEKAGQKHGNTKLVPQEQNHQRAGQNLRNTEVELDLPVDAIVIHQPRSTANWGTDAPDKENQPWHNGDRLLTSQGLMSPGQLCSQGGR</sequence>
<name>U17PE_MOUSE</name>
<reference key="1">
    <citation type="journal article" date="2009" name="PLoS Biol.">
        <title>Lineage-specific biology revealed by a finished genome assembly of the mouse.</title>
        <authorList>
            <person name="Church D.M."/>
            <person name="Goodstadt L."/>
            <person name="Hillier L.W."/>
            <person name="Zody M.C."/>
            <person name="Goldstein S."/>
            <person name="She X."/>
            <person name="Bult C.J."/>
            <person name="Agarwala R."/>
            <person name="Cherry J.L."/>
            <person name="DiCuccio M."/>
            <person name="Hlavina W."/>
            <person name="Kapustin Y."/>
            <person name="Meric P."/>
            <person name="Maglott D."/>
            <person name="Birtle Z."/>
            <person name="Marques A.C."/>
            <person name="Graves T."/>
            <person name="Zhou S."/>
            <person name="Teague B."/>
            <person name="Potamousis K."/>
            <person name="Churas C."/>
            <person name="Place M."/>
            <person name="Herschleb J."/>
            <person name="Runnheim R."/>
            <person name="Forrest D."/>
            <person name="Amos-Landgraf J."/>
            <person name="Schwartz D.C."/>
            <person name="Cheng Z."/>
            <person name="Lindblad-Toh K."/>
            <person name="Eichler E.E."/>
            <person name="Ponting C.P."/>
        </authorList>
    </citation>
    <scope>NUCLEOTIDE SEQUENCE [LARGE SCALE GENOMIC DNA]</scope>
    <source>
        <strain>C57BL/6J</strain>
    </source>
</reference>
<reference key="2">
    <citation type="journal article" date="2003" name="Nat. Rev. Genet.">
        <title>Human and mouse proteases: a comparative genomic approach.</title>
        <authorList>
            <person name="Puente X.S."/>
            <person name="Sanchez L.M."/>
            <person name="Overall C.M."/>
            <person name="Lopez-Otin C."/>
        </authorList>
    </citation>
    <scope>IDENTIFICATION</scope>
</reference>
<reference key="3">
    <citation type="journal article" date="2010" name="Nat. Cell Biol.">
        <title>Ubiquitin hydrolase Dub3 promotes oncogenic transformation by stabilizing Cdc25A.</title>
        <authorList>
            <person name="Pereg Y."/>
            <person name="Liu B.Y."/>
            <person name="O'Rourke K.M."/>
            <person name="Sagolla M."/>
            <person name="Dey A."/>
            <person name="Komuves L."/>
            <person name="French D.M."/>
            <person name="Dixit V.M."/>
        </authorList>
    </citation>
    <scope>FUNCTION</scope>
</reference>
<protein>
    <recommendedName>
        <fullName>Ubiquitin carboxyl-terminal hydrolase 17-like protein E</fullName>
        <shortName>USP17-E</shortName>
        <ecNumber>3.4.19.12</ecNumber>
    </recommendedName>
    <alternativeName>
        <fullName>Deubiquitinating enzyme 17-like protein 2</fullName>
    </alternativeName>
    <alternativeName>
        <fullName>Deubiquitinating protein 3</fullName>
        <shortName>DUB-3</shortName>
    </alternativeName>
    <alternativeName>
        <fullName>Deubiquitinating protein 6</fullName>
    </alternativeName>
    <alternativeName>
        <fullName>Ubiquitin carboxyl-terminal hydrolase 17-like protein 2</fullName>
    </alternativeName>
    <alternativeName>
        <fullName>Ubiquitin thioesterase 17-like protein 2</fullName>
    </alternativeName>
    <alternativeName>
        <fullName>Ubiquitin-specific-processing protease 17-like protein 2</fullName>
    </alternativeName>
</protein>
<accession>Q7M764</accession>
<accession>D3YU85</accession>
<evidence type="ECO:0000250" key="1"/>
<evidence type="ECO:0000255" key="2">
    <source>
        <dbReference type="PROSITE-ProRule" id="PRU10092"/>
    </source>
</evidence>
<evidence type="ECO:0000255" key="3">
    <source>
        <dbReference type="PROSITE-ProRule" id="PRU10093"/>
    </source>
</evidence>
<evidence type="ECO:0000256" key="4">
    <source>
        <dbReference type="SAM" id="MobiDB-lite"/>
    </source>
</evidence>
<evidence type="ECO:0000269" key="5">
    <source>
    </source>
</evidence>
<evidence type="ECO:0000305" key="6"/>
<dbReference type="EC" id="3.4.19.12"/>
<dbReference type="EMBL" id="AC110621">
    <property type="status" value="NOT_ANNOTATED_CDS"/>
    <property type="molecule type" value="Genomic_DNA"/>
</dbReference>
<dbReference type="EMBL" id="BN000117">
    <property type="protein sequence ID" value="CAD66057.1"/>
    <property type="status" value="ALT_SEQ"/>
    <property type="molecule type" value="Genomic_DNA"/>
</dbReference>
<dbReference type="CCDS" id="CCDS85368.1"/>
<dbReference type="SMR" id="Q7M764"/>
<dbReference type="FunCoup" id="Q7M764">
    <property type="interactions" value="236"/>
</dbReference>
<dbReference type="STRING" id="10090.ENSMUSP00000147776"/>
<dbReference type="MEROPS" id="C19.082"/>
<dbReference type="PaxDb" id="10090-ENSMUSP00000051716"/>
<dbReference type="UCSC" id="uc029wnn.1">
    <property type="organism name" value="mouse"/>
</dbReference>
<dbReference type="AGR" id="MGI:107697"/>
<dbReference type="MGI" id="MGI:107697">
    <property type="gene designation" value="Usp17le"/>
</dbReference>
<dbReference type="eggNOG" id="KOG1865">
    <property type="taxonomic scope" value="Eukaryota"/>
</dbReference>
<dbReference type="InParanoid" id="Q7M764"/>
<dbReference type="PhylomeDB" id="Q7M764"/>
<dbReference type="Reactome" id="R-MMU-5689880">
    <property type="pathway name" value="Ub-specific processing proteases"/>
</dbReference>
<dbReference type="Reactome" id="R-MMU-9648002">
    <property type="pathway name" value="RAS processing"/>
</dbReference>
<dbReference type="PRO" id="PR:Q7M764"/>
<dbReference type="Proteomes" id="UP000000589">
    <property type="component" value="Unplaced"/>
</dbReference>
<dbReference type="RNAct" id="Q7M764">
    <property type="molecule type" value="protein"/>
</dbReference>
<dbReference type="GO" id="GO:0005789">
    <property type="term" value="C:endoplasmic reticulum membrane"/>
    <property type="evidence" value="ECO:0000250"/>
    <property type="project" value="UniProtKB"/>
</dbReference>
<dbReference type="GO" id="GO:0005634">
    <property type="term" value="C:nucleus"/>
    <property type="evidence" value="ECO:0000250"/>
    <property type="project" value="UniProtKB"/>
</dbReference>
<dbReference type="GO" id="GO:0004843">
    <property type="term" value="F:cysteine-type deubiquitinase activity"/>
    <property type="evidence" value="ECO:0000314"/>
    <property type="project" value="MGI"/>
</dbReference>
<dbReference type="GO" id="GO:0006915">
    <property type="term" value="P:apoptotic process"/>
    <property type="evidence" value="ECO:0007669"/>
    <property type="project" value="UniProtKB-KW"/>
</dbReference>
<dbReference type="GO" id="GO:0071586">
    <property type="term" value="P:CAAX-box protein processing"/>
    <property type="evidence" value="ECO:0000250"/>
    <property type="project" value="UniProtKB"/>
</dbReference>
<dbReference type="GO" id="GO:0034260">
    <property type="term" value="P:negative regulation of GTPase activity"/>
    <property type="evidence" value="ECO:0000250"/>
    <property type="project" value="UniProtKB"/>
</dbReference>
<dbReference type="GO" id="GO:0010955">
    <property type="term" value="P:negative regulation of protein processing"/>
    <property type="evidence" value="ECO:0000250"/>
    <property type="project" value="UniProtKB"/>
</dbReference>
<dbReference type="GO" id="GO:0090315">
    <property type="term" value="P:negative regulation of protein targeting to membrane"/>
    <property type="evidence" value="ECO:0000250"/>
    <property type="project" value="UniProtKB"/>
</dbReference>
<dbReference type="GO" id="GO:0043547">
    <property type="term" value="P:positive regulation of GTPase activity"/>
    <property type="evidence" value="ECO:0000250"/>
    <property type="project" value="UniProtKB"/>
</dbReference>
<dbReference type="GO" id="GO:1900245">
    <property type="term" value="P:positive regulation of MDA-5 signaling pathway"/>
    <property type="evidence" value="ECO:0000250"/>
    <property type="project" value="UniProtKB"/>
</dbReference>
<dbReference type="GO" id="GO:1900246">
    <property type="term" value="P:positive regulation of RIG-I signaling pathway"/>
    <property type="evidence" value="ECO:0000250"/>
    <property type="project" value="UniProtKB"/>
</dbReference>
<dbReference type="GO" id="GO:0016579">
    <property type="term" value="P:protein deubiquitination"/>
    <property type="evidence" value="ECO:0000314"/>
    <property type="project" value="MGI"/>
</dbReference>
<dbReference type="GO" id="GO:0071108">
    <property type="term" value="P:protein K48-linked deubiquitination"/>
    <property type="evidence" value="ECO:0000250"/>
    <property type="project" value="UniProtKB"/>
</dbReference>
<dbReference type="GO" id="GO:0070536">
    <property type="term" value="P:protein K63-linked deubiquitination"/>
    <property type="evidence" value="ECO:0000250"/>
    <property type="project" value="UniProtKB"/>
</dbReference>
<dbReference type="GO" id="GO:0030334">
    <property type="term" value="P:regulation of cell migration"/>
    <property type="evidence" value="ECO:0000250"/>
    <property type="project" value="UniProtKB"/>
</dbReference>
<dbReference type="GO" id="GO:0042127">
    <property type="term" value="P:regulation of cell population proliferation"/>
    <property type="evidence" value="ECO:0000250"/>
    <property type="project" value="UniProtKB"/>
</dbReference>
<dbReference type="GO" id="GO:0050691">
    <property type="term" value="P:regulation of defense response to virus by host"/>
    <property type="evidence" value="ECO:0000250"/>
    <property type="project" value="UniProtKB"/>
</dbReference>
<dbReference type="GO" id="GO:0110030">
    <property type="term" value="P:regulation of G2/MI transition of meiotic cell cycle"/>
    <property type="evidence" value="ECO:0000250"/>
    <property type="project" value="UniProtKB"/>
</dbReference>
<dbReference type="GO" id="GO:1900027">
    <property type="term" value="P:regulation of ruffle assembly"/>
    <property type="evidence" value="ECO:0000250"/>
    <property type="project" value="UniProtKB"/>
</dbReference>
<dbReference type="CDD" id="cd02661">
    <property type="entry name" value="Peptidase_C19E"/>
    <property type="match status" value="1"/>
</dbReference>
<dbReference type="FunFam" id="3.90.70.10:FF:000197">
    <property type="entry name" value="Ubiquitin carboxyl-terminal hydrolase 17-like protein E"/>
    <property type="match status" value="1"/>
</dbReference>
<dbReference type="Gene3D" id="3.90.70.10">
    <property type="entry name" value="Cysteine proteinases"/>
    <property type="match status" value="1"/>
</dbReference>
<dbReference type="InterPro" id="IPR038765">
    <property type="entry name" value="Papain-like_cys_pep_sf"/>
</dbReference>
<dbReference type="InterPro" id="IPR050164">
    <property type="entry name" value="Peptidase_C19"/>
</dbReference>
<dbReference type="InterPro" id="IPR001394">
    <property type="entry name" value="Peptidase_C19_UCH"/>
</dbReference>
<dbReference type="InterPro" id="IPR018200">
    <property type="entry name" value="USP_CS"/>
</dbReference>
<dbReference type="InterPro" id="IPR028889">
    <property type="entry name" value="USP_dom"/>
</dbReference>
<dbReference type="PANTHER" id="PTHR24006:SF651">
    <property type="entry name" value="INACTIVE UBIQUITIN CARBOXYL-TERMINAL HYDROLASE 17-LIKE PROTEIN 4-RELATED"/>
    <property type="match status" value="1"/>
</dbReference>
<dbReference type="PANTHER" id="PTHR24006">
    <property type="entry name" value="UBIQUITIN CARBOXYL-TERMINAL HYDROLASE"/>
    <property type="match status" value="1"/>
</dbReference>
<dbReference type="Pfam" id="PF00443">
    <property type="entry name" value="UCH"/>
    <property type="match status" value="1"/>
</dbReference>
<dbReference type="SUPFAM" id="SSF54001">
    <property type="entry name" value="Cysteine proteinases"/>
    <property type="match status" value="1"/>
</dbReference>
<dbReference type="PROSITE" id="PS00972">
    <property type="entry name" value="USP_1"/>
    <property type="match status" value="1"/>
</dbReference>
<dbReference type="PROSITE" id="PS00973">
    <property type="entry name" value="USP_2"/>
    <property type="match status" value="1"/>
</dbReference>
<dbReference type="PROSITE" id="PS50235">
    <property type="entry name" value="USP_3"/>
    <property type="match status" value="1"/>
</dbReference>